<name>NU2M_RHYNA</name>
<sequence length="347" mass="38930">MNPLIFTLITSTIVLGTMIVMTSSHWLMIWMGFEMNMLAIIPMLMKQYSPRSMEAATKYFLTQATASMLLMLAIIINLVYSGQWTFTKLMNPTASIIMTVALAMKMGLAPFHFWVPEVTQGISLLSGLILLTWQKLAPLSVLYVISPIINLDLLLTMSILSILIGGWGGLNQTQLRKILAYSSIAHMGWMTSILIFNPMMTLLNLSLYILMTATTFTLFMTTSTTTTLALSHTWNKMPLITSSTLIIMLSLGGLPPLVGFLPKWMIIQELTKNNNIILATLMAITALLNLFFYMRLTYATSLTMFPTMNNMKIKWQFNHTKQTKCLPMLIVLSTMTLPLAPAMILLN</sequence>
<accession>Q330H0</accession>
<reference key="1">
    <citation type="submission" date="2003-12" db="EMBL/GenBank/DDBJ databases">
        <title>Bats and birds: flying in the face of mtDNA evolutionary rates.</title>
        <authorList>
            <person name="Worthington Wilmer J.M."/>
            <person name="Schneider C.J."/>
            <person name="Sorenson M.D."/>
        </authorList>
    </citation>
    <scope>NUCLEOTIDE SEQUENCE [GENOMIC DNA]</scope>
    <source>
        <strain>Isolate CR1</strain>
    </source>
</reference>
<proteinExistence type="inferred from homology"/>
<organism>
    <name type="scientific">Rhynchonycteris naso</name>
    <name type="common">Brazilian long-nosed bat</name>
    <name type="synonym">Vespertilio naso</name>
    <dbReference type="NCBI Taxonomy" id="249017"/>
    <lineage>
        <taxon>Eukaryota</taxon>
        <taxon>Metazoa</taxon>
        <taxon>Chordata</taxon>
        <taxon>Craniata</taxon>
        <taxon>Vertebrata</taxon>
        <taxon>Euteleostomi</taxon>
        <taxon>Mammalia</taxon>
        <taxon>Eutheria</taxon>
        <taxon>Laurasiatheria</taxon>
        <taxon>Chiroptera</taxon>
        <taxon>Yangochiroptera</taxon>
        <taxon>Emballonuridae</taxon>
        <taxon>Emballonurinae</taxon>
        <taxon>Rhynchonycteris</taxon>
    </lineage>
</organism>
<keyword id="KW-0249">Electron transport</keyword>
<keyword id="KW-0472">Membrane</keyword>
<keyword id="KW-0496">Mitochondrion</keyword>
<keyword id="KW-0999">Mitochondrion inner membrane</keyword>
<keyword id="KW-0520">NAD</keyword>
<keyword id="KW-0679">Respiratory chain</keyword>
<keyword id="KW-1278">Translocase</keyword>
<keyword id="KW-0812">Transmembrane</keyword>
<keyword id="KW-1133">Transmembrane helix</keyword>
<keyword id="KW-0813">Transport</keyword>
<keyword id="KW-0830">Ubiquinone</keyword>
<comment type="function">
    <text evidence="1">Core subunit of the mitochondrial membrane respiratory chain NADH dehydrogenase (Complex I) which catalyzes electron transfer from NADH through the respiratory chain, using ubiquinone as an electron acceptor. Essential for the catalytic activity and assembly of complex I.</text>
</comment>
<comment type="catalytic activity">
    <reaction evidence="1">
        <text>a ubiquinone + NADH + 5 H(+)(in) = a ubiquinol + NAD(+) + 4 H(+)(out)</text>
        <dbReference type="Rhea" id="RHEA:29091"/>
        <dbReference type="Rhea" id="RHEA-COMP:9565"/>
        <dbReference type="Rhea" id="RHEA-COMP:9566"/>
        <dbReference type="ChEBI" id="CHEBI:15378"/>
        <dbReference type="ChEBI" id="CHEBI:16389"/>
        <dbReference type="ChEBI" id="CHEBI:17976"/>
        <dbReference type="ChEBI" id="CHEBI:57540"/>
        <dbReference type="ChEBI" id="CHEBI:57945"/>
        <dbReference type="EC" id="7.1.1.2"/>
    </reaction>
</comment>
<comment type="subunit">
    <text evidence="1 2">Core subunit of respiratory chain NADH dehydrogenase (Complex I) which is composed of 45 different subunits. Interacts with TMEM242 (By similarity).</text>
</comment>
<comment type="subcellular location">
    <subcellularLocation>
        <location evidence="2">Mitochondrion inner membrane</location>
        <topology evidence="3">Multi-pass membrane protein</topology>
    </subcellularLocation>
</comment>
<comment type="similarity">
    <text evidence="4">Belongs to the complex I subunit 2 family.</text>
</comment>
<feature type="chain" id="PRO_0000256679" description="NADH-ubiquinone oxidoreductase chain 2">
    <location>
        <begin position="1"/>
        <end position="347"/>
    </location>
</feature>
<feature type="transmembrane region" description="Helical" evidence="3">
    <location>
        <begin position="13"/>
        <end position="33"/>
    </location>
</feature>
<feature type="transmembrane region" description="Helical" evidence="3">
    <location>
        <begin position="59"/>
        <end position="79"/>
    </location>
</feature>
<feature type="transmembrane region" description="Helical" evidence="3">
    <location>
        <begin position="96"/>
        <end position="116"/>
    </location>
</feature>
<feature type="transmembrane region" description="Helical" evidence="3">
    <location>
        <begin position="122"/>
        <end position="142"/>
    </location>
</feature>
<feature type="transmembrane region" description="Helical" evidence="3">
    <location>
        <begin position="144"/>
        <end position="164"/>
    </location>
</feature>
<feature type="transmembrane region" description="Helical" evidence="3">
    <location>
        <begin position="178"/>
        <end position="200"/>
    </location>
</feature>
<feature type="transmembrane region" description="Helical" evidence="3">
    <location>
        <begin position="210"/>
        <end position="232"/>
    </location>
</feature>
<feature type="transmembrane region" description="Helical" evidence="3">
    <location>
        <begin position="246"/>
        <end position="266"/>
    </location>
</feature>
<feature type="transmembrane region" description="Helical" evidence="3">
    <location>
        <begin position="276"/>
        <end position="296"/>
    </location>
</feature>
<feature type="transmembrane region" description="Helical" evidence="3">
    <location>
        <begin position="326"/>
        <end position="346"/>
    </location>
</feature>
<protein>
    <recommendedName>
        <fullName evidence="1">NADH-ubiquinone oxidoreductase chain 2</fullName>
        <ecNumber evidence="1">7.1.1.2</ecNumber>
    </recommendedName>
    <alternativeName>
        <fullName>NADH dehydrogenase subunit 2</fullName>
    </alternativeName>
</protein>
<geneLocation type="mitochondrion"/>
<gene>
    <name evidence="1" type="primary">MT-ND2</name>
    <name type="synonym">MTND2</name>
    <name type="synonym">NADH2</name>
    <name type="synonym">ND2</name>
</gene>
<dbReference type="EC" id="7.1.1.2" evidence="1"/>
<dbReference type="EMBL" id="AY504522">
    <property type="protein sequence ID" value="AAS91387.1"/>
    <property type="molecule type" value="Genomic_DNA"/>
</dbReference>
<dbReference type="SMR" id="Q330H0"/>
<dbReference type="GO" id="GO:0005743">
    <property type="term" value="C:mitochondrial inner membrane"/>
    <property type="evidence" value="ECO:0000250"/>
    <property type="project" value="UniProtKB"/>
</dbReference>
<dbReference type="GO" id="GO:0008137">
    <property type="term" value="F:NADH dehydrogenase (ubiquinone) activity"/>
    <property type="evidence" value="ECO:0000250"/>
    <property type="project" value="UniProtKB"/>
</dbReference>
<dbReference type="GO" id="GO:0006120">
    <property type="term" value="P:mitochondrial electron transport, NADH to ubiquinone"/>
    <property type="evidence" value="ECO:0000250"/>
    <property type="project" value="UniProtKB"/>
</dbReference>
<dbReference type="GO" id="GO:0032981">
    <property type="term" value="P:mitochondrial respiratory chain complex I assembly"/>
    <property type="evidence" value="ECO:0000250"/>
    <property type="project" value="UniProtKB"/>
</dbReference>
<dbReference type="InterPro" id="IPR050175">
    <property type="entry name" value="Complex_I_Subunit_2"/>
</dbReference>
<dbReference type="InterPro" id="IPR010933">
    <property type="entry name" value="NADH_DH_su2_C"/>
</dbReference>
<dbReference type="InterPro" id="IPR003917">
    <property type="entry name" value="NADH_UbQ_OxRdtase_chain2"/>
</dbReference>
<dbReference type="InterPro" id="IPR001750">
    <property type="entry name" value="ND/Mrp_TM"/>
</dbReference>
<dbReference type="PANTHER" id="PTHR46552">
    <property type="entry name" value="NADH-UBIQUINONE OXIDOREDUCTASE CHAIN 2"/>
    <property type="match status" value="1"/>
</dbReference>
<dbReference type="PANTHER" id="PTHR46552:SF1">
    <property type="entry name" value="NADH-UBIQUINONE OXIDOREDUCTASE CHAIN 2"/>
    <property type="match status" value="1"/>
</dbReference>
<dbReference type="Pfam" id="PF06444">
    <property type="entry name" value="NADH_dehy_S2_C"/>
    <property type="match status" value="1"/>
</dbReference>
<dbReference type="Pfam" id="PF00361">
    <property type="entry name" value="Proton_antipo_M"/>
    <property type="match status" value="1"/>
</dbReference>
<dbReference type="PRINTS" id="PR01436">
    <property type="entry name" value="NADHDHGNASE2"/>
</dbReference>
<evidence type="ECO:0000250" key="1">
    <source>
        <dbReference type="UniProtKB" id="P03891"/>
    </source>
</evidence>
<evidence type="ECO:0000250" key="2">
    <source>
        <dbReference type="UniProtKB" id="P03892"/>
    </source>
</evidence>
<evidence type="ECO:0000255" key="3"/>
<evidence type="ECO:0000305" key="4"/>